<feature type="chain" id="PRO_0000067737" description="DNA-directed RNA polymerase subunit beta'">
    <location>
        <begin position="1"/>
        <end position="1333"/>
    </location>
</feature>
<feature type="binding site" evidence="1">
    <location>
        <position position="60"/>
    </location>
    <ligand>
        <name>Zn(2+)</name>
        <dbReference type="ChEBI" id="CHEBI:29105"/>
        <label>1</label>
    </ligand>
</feature>
<feature type="binding site" evidence="1">
    <location>
        <position position="62"/>
    </location>
    <ligand>
        <name>Zn(2+)</name>
        <dbReference type="ChEBI" id="CHEBI:29105"/>
        <label>1</label>
    </ligand>
</feature>
<feature type="binding site" evidence="1">
    <location>
        <position position="75"/>
    </location>
    <ligand>
        <name>Zn(2+)</name>
        <dbReference type="ChEBI" id="CHEBI:29105"/>
        <label>1</label>
    </ligand>
</feature>
<feature type="binding site" evidence="1">
    <location>
        <position position="78"/>
    </location>
    <ligand>
        <name>Zn(2+)</name>
        <dbReference type="ChEBI" id="CHEBI:29105"/>
        <label>1</label>
    </ligand>
</feature>
<feature type="binding site" evidence="1">
    <location>
        <position position="535"/>
    </location>
    <ligand>
        <name>Mg(2+)</name>
        <dbReference type="ChEBI" id="CHEBI:18420"/>
    </ligand>
</feature>
<feature type="binding site" evidence="1">
    <location>
        <position position="537"/>
    </location>
    <ligand>
        <name>Mg(2+)</name>
        <dbReference type="ChEBI" id="CHEBI:18420"/>
    </ligand>
</feature>
<feature type="binding site" evidence="1">
    <location>
        <position position="539"/>
    </location>
    <ligand>
        <name>Mg(2+)</name>
        <dbReference type="ChEBI" id="CHEBI:18420"/>
    </ligand>
</feature>
<feature type="binding site" evidence="1">
    <location>
        <position position="901"/>
    </location>
    <ligand>
        <name>Zn(2+)</name>
        <dbReference type="ChEBI" id="CHEBI:29105"/>
        <label>2</label>
    </ligand>
</feature>
<feature type="binding site" evidence="1">
    <location>
        <position position="983"/>
    </location>
    <ligand>
        <name>Zn(2+)</name>
        <dbReference type="ChEBI" id="CHEBI:29105"/>
        <label>2</label>
    </ligand>
</feature>
<feature type="binding site" evidence="1">
    <location>
        <position position="990"/>
    </location>
    <ligand>
        <name>Zn(2+)</name>
        <dbReference type="ChEBI" id="CHEBI:29105"/>
        <label>2</label>
    </ligand>
</feature>
<feature type="binding site" evidence="1">
    <location>
        <position position="993"/>
    </location>
    <ligand>
        <name>Zn(2+)</name>
        <dbReference type="ChEBI" id="CHEBI:29105"/>
        <label>2</label>
    </ligand>
</feature>
<protein>
    <recommendedName>
        <fullName evidence="1">DNA-directed RNA polymerase subunit beta'</fullName>
        <shortName evidence="1">RNAP subunit beta'</shortName>
        <ecNumber evidence="1">2.7.7.6</ecNumber>
    </recommendedName>
    <alternativeName>
        <fullName evidence="1">RNA polymerase subunit beta'</fullName>
    </alternativeName>
    <alternativeName>
        <fullName evidence="1">Transcriptase subunit beta'</fullName>
    </alternativeName>
</protein>
<accession>Q8NT25</accession>
<reference key="1">
    <citation type="journal article" date="2003" name="Appl. Microbiol. Biotechnol.">
        <title>The Corynebacterium glutamicum genome: features and impacts on biotechnological processes.</title>
        <authorList>
            <person name="Ikeda M."/>
            <person name="Nakagawa S."/>
        </authorList>
    </citation>
    <scope>NUCLEOTIDE SEQUENCE [LARGE SCALE GENOMIC DNA]</scope>
    <source>
        <strain>ATCC 13032 / DSM 20300 / JCM 1318 / BCRC 11384 / CCUG 27702 / LMG 3730 / NBRC 12168 / NCIMB 10025 / NRRL B-2784 / 534</strain>
    </source>
</reference>
<reference key="2">
    <citation type="journal article" date="2003" name="J. Biotechnol.">
        <title>The complete Corynebacterium glutamicum ATCC 13032 genome sequence and its impact on the production of L-aspartate-derived amino acids and vitamins.</title>
        <authorList>
            <person name="Kalinowski J."/>
            <person name="Bathe B."/>
            <person name="Bartels D."/>
            <person name="Bischoff N."/>
            <person name="Bott M."/>
            <person name="Burkovski A."/>
            <person name="Dusch N."/>
            <person name="Eggeling L."/>
            <person name="Eikmanns B.J."/>
            <person name="Gaigalat L."/>
            <person name="Goesmann A."/>
            <person name="Hartmann M."/>
            <person name="Huthmacher K."/>
            <person name="Kraemer R."/>
            <person name="Linke B."/>
            <person name="McHardy A.C."/>
            <person name="Meyer F."/>
            <person name="Moeckel B."/>
            <person name="Pfefferle W."/>
            <person name="Puehler A."/>
            <person name="Rey D.A."/>
            <person name="Rueckert C."/>
            <person name="Rupp O."/>
            <person name="Sahm H."/>
            <person name="Wendisch V.F."/>
            <person name="Wiegraebe I."/>
            <person name="Tauch A."/>
        </authorList>
    </citation>
    <scope>NUCLEOTIDE SEQUENCE [LARGE SCALE GENOMIC DNA]</scope>
    <source>
        <strain>ATCC 13032 / DSM 20300 / JCM 1318 / BCRC 11384 / CCUG 27702 / LMG 3730 / NBRC 12168 / NCIMB 10025 / NRRL B-2784 / 534</strain>
    </source>
</reference>
<proteinExistence type="inferred from homology"/>
<organism>
    <name type="scientific">Corynebacterium glutamicum (strain ATCC 13032 / DSM 20300 / JCM 1318 / BCRC 11384 / CCUG 27702 / LMG 3730 / NBRC 12168 / NCIMB 10025 / NRRL B-2784 / 534)</name>
    <dbReference type="NCBI Taxonomy" id="196627"/>
    <lineage>
        <taxon>Bacteria</taxon>
        <taxon>Bacillati</taxon>
        <taxon>Actinomycetota</taxon>
        <taxon>Actinomycetes</taxon>
        <taxon>Mycobacteriales</taxon>
        <taxon>Corynebacteriaceae</taxon>
        <taxon>Corynebacterium</taxon>
    </lineage>
</organism>
<dbReference type="EC" id="2.7.7.6" evidence="1"/>
<dbReference type="EMBL" id="BA000036">
    <property type="protein sequence ID" value="BAB97882.1"/>
    <property type="molecule type" value="Genomic_DNA"/>
</dbReference>
<dbReference type="EMBL" id="BX927149">
    <property type="protein sequence ID" value="CAF19203.1"/>
    <property type="molecule type" value="Genomic_DNA"/>
</dbReference>
<dbReference type="RefSeq" id="NP_599734.1">
    <property type="nucleotide sequence ID" value="NC_003450.3"/>
</dbReference>
<dbReference type="RefSeq" id="WP_011013691.1">
    <property type="nucleotide sequence ID" value="NC_006958.1"/>
</dbReference>
<dbReference type="SMR" id="Q8NT25"/>
<dbReference type="STRING" id="196627.cg0577"/>
<dbReference type="KEGG" id="cgb:cg0577"/>
<dbReference type="KEGG" id="cgl:Cgl0489"/>
<dbReference type="PATRIC" id="fig|196627.13.peg.488"/>
<dbReference type="eggNOG" id="COG0086">
    <property type="taxonomic scope" value="Bacteria"/>
</dbReference>
<dbReference type="HOGENOM" id="CLU_000524_3_1_11"/>
<dbReference type="OrthoDB" id="9815296at2"/>
<dbReference type="BioCyc" id="CORYNE:G18NG-10051-MONOMER"/>
<dbReference type="Proteomes" id="UP000000582">
    <property type="component" value="Chromosome"/>
</dbReference>
<dbReference type="Proteomes" id="UP000001009">
    <property type="component" value="Chromosome"/>
</dbReference>
<dbReference type="GO" id="GO:0000428">
    <property type="term" value="C:DNA-directed RNA polymerase complex"/>
    <property type="evidence" value="ECO:0007669"/>
    <property type="project" value="UniProtKB-KW"/>
</dbReference>
<dbReference type="GO" id="GO:0003677">
    <property type="term" value="F:DNA binding"/>
    <property type="evidence" value="ECO:0007669"/>
    <property type="project" value="UniProtKB-UniRule"/>
</dbReference>
<dbReference type="GO" id="GO:0003899">
    <property type="term" value="F:DNA-directed RNA polymerase activity"/>
    <property type="evidence" value="ECO:0007669"/>
    <property type="project" value="UniProtKB-UniRule"/>
</dbReference>
<dbReference type="GO" id="GO:0000287">
    <property type="term" value="F:magnesium ion binding"/>
    <property type="evidence" value="ECO:0007669"/>
    <property type="project" value="UniProtKB-UniRule"/>
</dbReference>
<dbReference type="GO" id="GO:0008270">
    <property type="term" value="F:zinc ion binding"/>
    <property type="evidence" value="ECO:0007669"/>
    <property type="project" value="UniProtKB-UniRule"/>
</dbReference>
<dbReference type="GO" id="GO:0006351">
    <property type="term" value="P:DNA-templated transcription"/>
    <property type="evidence" value="ECO:0007669"/>
    <property type="project" value="UniProtKB-UniRule"/>
</dbReference>
<dbReference type="CDD" id="cd02655">
    <property type="entry name" value="RNAP_beta'_C"/>
    <property type="match status" value="1"/>
</dbReference>
<dbReference type="CDD" id="cd01609">
    <property type="entry name" value="RNAP_beta'_N"/>
    <property type="match status" value="1"/>
</dbReference>
<dbReference type="FunFam" id="1.10.150.390:FF:000002">
    <property type="entry name" value="DNA-directed RNA polymerase subunit beta"/>
    <property type="match status" value="1"/>
</dbReference>
<dbReference type="FunFam" id="1.10.40.90:FF:000001">
    <property type="entry name" value="DNA-directed RNA polymerase subunit beta"/>
    <property type="match status" value="1"/>
</dbReference>
<dbReference type="FunFam" id="4.10.860.120:FF:000001">
    <property type="entry name" value="DNA-directed RNA polymerase subunit beta"/>
    <property type="match status" value="1"/>
</dbReference>
<dbReference type="Gene3D" id="1.10.132.30">
    <property type="match status" value="1"/>
</dbReference>
<dbReference type="Gene3D" id="1.10.150.390">
    <property type="match status" value="1"/>
</dbReference>
<dbReference type="Gene3D" id="1.10.1790.20">
    <property type="match status" value="1"/>
</dbReference>
<dbReference type="Gene3D" id="1.10.40.90">
    <property type="match status" value="1"/>
</dbReference>
<dbReference type="Gene3D" id="2.40.40.20">
    <property type="match status" value="1"/>
</dbReference>
<dbReference type="Gene3D" id="2.40.50.100">
    <property type="match status" value="1"/>
</dbReference>
<dbReference type="Gene3D" id="4.10.860.120">
    <property type="entry name" value="RNA polymerase II, clamp domain"/>
    <property type="match status" value="1"/>
</dbReference>
<dbReference type="Gene3D" id="1.10.274.100">
    <property type="entry name" value="RNA polymerase Rpb1, domain 3"/>
    <property type="match status" value="1"/>
</dbReference>
<dbReference type="HAMAP" id="MF_01322">
    <property type="entry name" value="RNApol_bact_RpoC"/>
    <property type="match status" value="1"/>
</dbReference>
<dbReference type="InterPro" id="IPR045867">
    <property type="entry name" value="DNA-dir_RpoC_beta_prime"/>
</dbReference>
<dbReference type="InterPro" id="IPR012754">
    <property type="entry name" value="DNA-dir_RpoC_beta_prime_bact"/>
</dbReference>
<dbReference type="InterPro" id="IPR000722">
    <property type="entry name" value="RNA_pol_asu"/>
</dbReference>
<dbReference type="InterPro" id="IPR006592">
    <property type="entry name" value="RNA_pol_N"/>
</dbReference>
<dbReference type="InterPro" id="IPR007080">
    <property type="entry name" value="RNA_pol_Rpb1_1"/>
</dbReference>
<dbReference type="InterPro" id="IPR007066">
    <property type="entry name" value="RNA_pol_Rpb1_3"/>
</dbReference>
<dbReference type="InterPro" id="IPR042102">
    <property type="entry name" value="RNA_pol_Rpb1_3_sf"/>
</dbReference>
<dbReference type="InterPro" id="IPR007081">
    <property type="entry name" value="RNA_pol_Rpb1_5"/>
</dbReference>
<dbReference type="InterPro" id="IPR044893">
    <property type="entry name" value="RNA_pol_Rpb1_clamp_domain"/>
</dbReference>
<dbReference type="InterPro" id="IPR038120">
    <property type="entry name" value="Rpb1_funnel_sf"/>
</dbReference>
<dbReference type="NCBIfam" id="NF011498">
    <property type="entry name" value="PRK14906.1"/>
    <property type="match status" value="1"/>
</dbReference>
<dbReference type="NCBIfam" id="TIGR02386">
    <property type="entry name" value="rpoC_TIGR"/>
    <property type="match status" value="1"/>
</dbReference>
<dbReference type="PANTHER" id="PTHR19376">
    <property type="entry name" value="DNA-DIRECTED RNA POLYMERASE"/>
    <property type="match status" value="1"/>
</dbReference>
<dbReference type="PANTHER" id="PTHR19376:SF54">
    <property type="entry name" value="DNA-DIRECTED RNA POLYMERASE SUBUNIT BETA"/>
    <property type="match status" value="1"/>
</dbReference>
<dbReference type="Pfam" id="PF04997">
    <property type="entry name" value="RNA_pol_Rpb1_1"/>
    <property type="match status" value="1"/>
</dbReference>
<dbReference type="Pfam" id="PF00623">
    <property type="entry name" value="RNA_pol_Rpb1_2"/>
    <property type="match status" value="1"/>
</dbReference>
<dbReference type="Pfam" id="PF04983">
    <property type="entry name" value="RNA_pol_Rpb1_3"/>
    <property type="match status" value="1"/>
</dbReference>
<dbReference type="Pfam" id="PF04998">
    <property type="entry name" value="RNA_pol_Rpb1_5"/>
    <property type="match status" value="1"/>
</dbReference>
<dbReference type="SMART" id="SM00663">
    <property type="entry name" value="RPOLA_N"/>
    <property type="match status" value="1"/>
</dbReference>
<dbReference type="SUPFAM" id="SSF64484">
    <property type="entry name" value="beta and beta-prime subunits of DNA dependent RNA-polymerase"/>
    <property type="match status" value="1"/>
</dbReference>
<comment type="function">
    <text evidence="1">DNA-dependent RNA polymerase catalyzes the transcription of DNA into RNA using the four ribonucleoside triphosphates as substrates.</text>
</comment>
<comment type="catalytic activity">
    <reaction evidence="1">
        <text>RNA(n) + a ribonucleoside 5'-triphosphate = RNA(n+1) + diphosphate</text>
        <dbReference type="Rhea" id="RHEA:21248"/>
        <dbReference type="Rhea" id="RHEA-COMP:14527"/>
        <dbReference type="Rhea" id="RHEA-COMP:17342"/>
        <dbReference type="ChEBI" id="CHEBI:33019"/>
        <dbReference type="ChEBI" id="CHEBI:61557"/>
        <dbReference type="ChEBI" id="CHEBI:140395"/>
        <dbReference type="EC" id="2.7.7.6"/>
    </reaction>
</comment>
<comment type="cofactor">
    <cofactor evidence="1">
        <name>Mg(2+)</name>
        <dbReference type="ChEBI" id="CHEBI:18420"/>
    </cofactor>
    <text evidence="1">Binds 1 Mg(2+) ion per subunit.</text>
</comment>
<comment type="cofactor">
    <cofactor evidence="1">
        <name>Zn(2+)</name>
        <dbReference type="ChEBI" id="CHEBI:29105"/>
    </cofactor>
    <text evidence="1">Binds 2 Zn(2+) ions per subunit.</text>
</comment>
<comment type="subunit">
    <text evidence="1">The RNAP catalytic core consists of 2 alpha, 1 beta, 1 beta' and 1 omega subunit. When a sigma factor is associated with the core the holoenzyme is formed, which can initiate transcription.</text>
</comment>
<comment type="similarity">
    <text evidence="1">Belongs to the RNA polymerase beta' chain family.</text>
</comment>
<evidence type="ECO:0000255" key="1">
    <source>
        <dbReference type="HAMAP-Rule" id="MF_01322"/>
    </source>
</evidence>
<sequence length="1333" mass="147295">MLDVNVFDELRIGLATADDIRRWSKGEVKKPETINYRTLKPEKDGLFCERIFGPTRDWECACGKYKRVRYKGIICERCGVEVTKSKVRRERMGHIELAAPVTHIWYFKGVPSRLGYLLDLAPKDLDLIIYFGANIITSVDEEARHSDQTTLEAEMLLEKKDVEADAESDIAERAEKLEEDLAELEAAGAKADARRKVQAAADKEMQHIRERAQREIDRLDEVWQTFIKLAPKQMIRDEKLYDELIDRYEDYFTGGMGAESIEALIQNFDLDAEAEELRDIINNGKGQKKMRALKRLKVVAAFQRSGNDPAGMVLNAIPVIPPELRPMVQLDGGRFATSDLNDLYRRVINRNNRLKRMIELGAPEIIVNNEKRMLQESVDALFDNGRRGRPVTGPGNRPLKSLSDLLKGKQGRFRQNLLGKRVDYSGRSVIIVGPQLRLHECGLPKLMALELFKPFVMKRLVENEYAQNIKSAKRMVERQRPEVWDVLEEAISEHPVMLNRAPTLHRLGIQAFEPVLVEGKAIQLHPLACEAFNADFDGDQMAVHLPLSAEAQAEARVLMLASNNILSPASGKPLAMPRLDMVTGLYYLTLEKSSEEFGGQGAYQPADENGPEKGVYSSLAEAIMAYDRGVLGLQAPVRIRLNHLRPPAEVEAEQFPDGWNQGETWLAHTTLGRVMFNEILPWNYPYLEGVMVRKGGGSDKIMLGDVVNDLAAKYPMITVAQTMDKMKDAGFYWSTRSGVTIAMSDVLVLPNKEEMLDRYEESARQIEVKYNRGKLTGRERYDRLVELWKDATDEVGQAVEDLYPDDNPIPMIVKSGAAGNMRQIWTLAGMKGMVVNSKGDYITRPIKTSFREGLTVLEYFNNSHGSRKGLADTALRTADSGYLTRRLVDVAQDVIVRVEDCGTRQGVRVPVAAEVLDATGAVTGYTRHDLIETSVSGRVLAGDATNAAGEVVLAAGTDLTELNIDLLVEAGIKDVKVRSVLTCQTPTGVCAKCYGKSMASGQQVDIGEAVGIVAAQSIGEPGTQLTMRTFHQGGVGGDITGGLPRVQELFEARVPKNCAPIASVEGVIHLEDEGNFYTLTIVPDDGSDNVVYEKLSKRQGLASTRVAMESNAGAFIERTLTEGDRVTVGQRLLRGAADPHDVLEILGRRGVEQHLIDEVQAVYRAQGVAIHDKHIEIIIRQMLRRGTVIESGSTEFLPGSLVDLSEAKLANSEAIGAGGQPAELRSEIMGITKASLATESWLSAASFQETTRVLTDAAINKRSDKLIGLKENVIIGKLIPAGTGISRYRNISIKPTEAARNAAYSIPTYGESIYGDDGFGEFTGASVPLDEAF</sequence>
<gene>
    <name evidence="1" type="primary">rpoC</name>
    <name type="ordered locus">Cgl0489</name>
    <name type="ordered locus">cg0577</name>
</gene>
<keyword id="KW-0240">DNA-directed RNA polymerase</keyword>
<keyword id="KW-0460">Magnesium</keyword>
<keyword id="KW-0479">Metal-binding</keyword>
<keyword id="KW-0548">Nucleotidyltransferase</keyword>
<keyword id="KW-1185">Reference proteome</keyword>
<keyword id="KW-0804">Transcription</keyword>
<keyword id="KW-0808">Transferase</keyword>
<keyword id="KW-0862">Zinc</keyword>
<name>RPOC_CORGL</name>